<keyword id="KW-0027">Amidation</keyword>
<keyword id="KW-0165">Cleavage on pair of basic residues</keyword>
<keyword id="KW-0903">Direct protein sequencing</keyword>
<keyword id="KW-0527">Neuropeptide</keyword>
<keyword id="KW-1185">Reference proteome</keyword>
<keyword id="KW-0964">Secreted</keyword>
<keyword id="KW-0732">Signal</keyword>
<organism>
    <name type="scientific">Caenorhabditis elegans</name>
    <dbReference type="NCBI Taxonomy" id="6239"/>
    <lineage>
        <taxon>Eukaryota</taxon>
        <taxon>Metazoa</taxon>
        <taxon>Ecdysozoa</taxon>
        <taxon>Nematoda</taxon>
        <taxon>Chromadorea</taxon>
        <taxon>Rhabditida</taxon>
        <taxon>Rhabditina</taxon>
        <taxon>Rhabditomorpha</taxon>
        <taxon>Rhabditoidea</taxon>
        <taxon>Rhabditidae</taxon>
        <taxon>Peloderinae</taxon>
        <taxon>Caenorhabditis</taxon>
    </lineage>
</organism>
<evidence type="ECO:0000255" key="1"/>
<evidence type="ECO:0000269" key="2">
    <source>
    </source>
</evidence>
<evidence type="ECO:0000305" key="3"/>
<evidence type="ECO:0000312" key="4">
    <source>
        <dbReference type="WormBase" id="R173.4"/>
    </source>
</evidence>
<reference key="1">
    <citation type="journal article" date="1998" name="Science">
        <title>Genome sequence of the nematode C. elegans: a platform for investigating biology.</title>
        <authorList>
            <consortium name="The C. elegans sequencing consortium"/>
        </authorList>
    </citation>
    <scope>NUCLEOTIDE SEQUENCE [LARGE SCALE GENOMIC DNA]</scope>
    <source>
        <strain>Bristol N2</strain>
    </source>
</reference>
<reference evidence="3" key="2">
    <citation type="journal article" date="2005" name="Biochem. Biophys. Res. Commun.">
        <title>Discovering neuropeptides in Caenorhabditis elegans by two dimensional liquid chromatography and mass spectrometry.</title>
        <authorList>
            <person name="Husson S.J."/>
            <person name="Clynen E."/>
            <person name="Baggerman G."/>
            <person name="De Loof A."/>
            <person name="Schoofs L."/>
        </authorList>
    </citation>
    <scope>PROTEIN SEQUENCE OF 51-61 AND 65-82</scope>
    <scope>AMIDATION AT PHE-61 AND PHE-82</scope>
    <source>
        <strain evidence="2">Bristol N2</strain>
    </source>
</reference>
<feature type="signal peptide" evidence="1">
    <location>
        <begin position="1"/>
        <end position="19"/>
    </location>
</feature>
<feature type="propeptide" id="PRO_0000312086" evidence="1">
    <location>
        <begin position="20"/>
        <end position="48"/>
    </location>
</feature>
<feature type="peptide" id="PRO_0000312087" description="EFNADDLTLRF-amide" evidence="2">
    <location>
        <begin position="51"/>
        <end position="61"/>
    </location>
</feature>
<feature type="peptide" id="PRO_0000312088" description="GGAGEPLAFSPDMLSLRF-amide" evidence="2">
    <location>
        <begin position="65"/>
        <end position="82"/>
    </location>
</feature>
<feature type="modified residue" description="Phenylalanine amide" evidence="2">
    <location>
        <position position="61"/>
    </location>
</feature>
<feature type="modified residue" description="Phenylalanine amide" evidence="2">
    <location>
        <position position="82"/>
    </location>
</feature>
<name>FLP26_CAEEL</name>
<sequence>MKVMFMLALLFSSLVATSAFRLPFQFFGANEDFNSGLTKRNYYESKPYKREFNADDLTLRFGKRGGAGEPLAFSPDMLSLRFGK</sequence>
<protein>
    <recommendedName>
        <fullName>FMRFamide-like neuropeptides 26</fullName>
    </recommendedName>
    <component>
        <recommendedName>
            <fullName>EFNADDLTLRF-amide</fullName>
        </recommendedName>
    </component>
    <component>
        <recommendedName>
            <fullName>GGAGEPLAFSPDMLSLRF-amide</fullName>
        </recommendedName>
    </component>
</protein>
<comment type="function">
    <text evidence="3">FMRFamides and FMRFamide-like peptides are neuropeptides.</text>
</comment>
<comment type="subcellular location">
    <subcellularLocation>
        <location evidence="3">Secreted</location>
    </subcellularLocation>
</comment>
<comment type="tissue specificity">
    <text evidence="3">Each flp gene is expressed in a distinct set of neurons.</text>
</comment>
<comment type="similarity">
    <text evidence="2">Belongs to the FARP (FMRFamide related peptide) family.</text>
</comment>
<gene>
    <name evidence="4" type="primary">flp-26</name>
    <name type="ORF">R173.4</name>
</gene>
<accession>Q8MPY9</accession>
<dbReference type="EMBL" id="FO080190">
    <property type="protein sequence ID" value="CCD61850.1"/>
    <property type="molecule type" value="Genomic_DNA"/>
</dbReference>
<dbReference type="RefSeq" id="NP_741827.1">
    <property type="nucleotide sequence ID" value="NM_171717.7"/>
</dbReference>
<dbReference type="BioGRID" id="56763">
    <property type="interactions" value="3"/>
</dbReference>
<dbReference type="FunCoup" id="Q8MPY9">
    <property type="interactions" value="1522"/>
</dbReference>
<dbReference type="STRING" id="6239.R173.4.1"/>
<dbReference type="PaxDb" id="6239-R173.4"/>
<dbReference type="EnsemblMetazoa" id="R173.4.1">
    <property type="protein sequence ID" value="R173.4.1"/>
    <property type="gene ID" value="WBGene00020126"/>
</dbReference>
<dbReference type="GeneID" id="259712"/>
<dbReference type="KEGG" id="cel:CELE_R173.4"/>
<dbReference type="UCSC" id="R173.4">
    <property type="organism name" value="c. elegans"/>
</dbReference>
<dbReference type="AGR" id="WB:WBGene00020126"/>
<dbReference type="CTD" id="259712"/>
<dbReference type="WormBase" id="R173.4">
    <property type="protein sequence ID" value="CE31059"/>
    <property type="gene ID" value="WBGene00020126"/>
    <property type="gene designation" value="flp-26"/>
</dbReference>
<dbReference type="eggNOG" id="ENOG502R8X3">
    <property type="taxonomic scope" value="Eukaryota"/>
</dbReference>
<dbReference type="HOGENOM" id="CLU_2560417_0_0_1"/>
<dbReference type="InParanoid" id="Q8MPY9"/>
<dbReference type="OMA" id="YESKPYK"/>
<dbReference type="OrthoDB" id="5813176at2759"/>
<dbReference type="PRO" id="PR:Q8MPY9"/>
<dbReference type="Proteomes" id="UP000001940">
    <property type="component" value="Chromosome X"/>
</dbReference>
<dbReference type="Bgee" id="WBGene00020126">
    <property type="expression patterns" value="Expressed in larva and 3 other cell types or tissues"/>
</dbReference>
<dbReference type="GO" id="GO:0005576">
    <property type="term" value="C:extracellular region"/>
    <property type="evidence" value="ECO:0007669"/>
    <property type="project" value="UniProtKB-SubCell"/>
</dbReference>
<dbReference type="GO" id="GO:0007218">
    <property type="term" value="P:neuropeptide signaling pathway"/>
    <property type="evidence" value="ECO:0007669"/>
    <property type="project" value="UniProtKB-KW"/>
</dbReference>
<proteinExistence type="evidence at protein level"/>